<gene>
    <name type="primary">EIF2D</name>
    <name type="synonym">LGTN</name>
</gene>
<protein>
    <recommendedName>
        <fullName>Eukaryotic translation initiation factor 2D</fullName>
        <shortName>eIF2d</shortName>
    </recommendedName>
    <alternativeName>
        <fullName>Ligatin</fullName>
    </alternativeName>
</protein>
<sequence length="579" mass="63647">MFAKAFRVKSNTAIKGSDRRKLRADVAAVFPTLGTDQVSELVPGKEELNIVKLYAHRGDAVTVYVSGGNPILFELEKNLYPTVYTLWSYPDLLPTFTTWPLVLEKLVGGADLMLPGLVVPPAGLPQVQKGDLCAVALVGNRAPVAVGVAAMSTAEMLASGLKGRGFCVLHSYQDHLWRSGDKSSPPSIAPLALNPPDLSEGKGCVKADTALQGAMRQLTLEEEVQQRCEEKSPSEATEDPGPGGLHVDPMDSKTLQEQMDELLQTCFLHALKCSVRKADLPLLTSTLLGSHMFSCCPEGRQLDIKKSSYKKLSKFLQHMQQEQIIQVQELSKGVESIVAVDWKHPRITSFVIPEPSPTSQTIQEGSREQPYHPPDIKPLYCVPASMTLLFQESGHKKGSVLEGSEVRTFVINYAKKNDLVDADNKNLVKLDPILCDCILEKDEQHTVTKLPWDSLLGRCLEKLQPAYQVTFPGQEPIVKKGRICPIDITLAQKASNKKVTVVRNLEAYGLDPRSVAATLQQRCQASTTVTSAPGLKDSVQVQIQGNQIHHLGRLLLEEYRLPRKHIQGLEKAPKPGKKK</sequence>
<proteinExistence type="evidence at transcript level"/>
<keyword id="KW-0007">Acetylation</keyword>
<keyword id="KW-0963">Cytoplasm</keyword>
<keyword id="KW-0396">Initiation factor</keyword>
<keyword id="KW-0597">Phosphoprotein</keyword>
<keyword id="KW-0648">Protein biosynthesis</keyword>
<keyword id="KW-1185">Reference proteome</keyword>
<evidence type="ECO:0000250" key="1"/>
<evidence type="ECO:0000250" key="2">
    <source>
        <dbReference type="UniProtKB" id="P41214"/>
    </source>
</evidence>
<evidence type="ECO:0000255" key="3">
    <source>
        <dbReference type="PROSITE-ProRule" id="PRU00161"/>
    </source>
</evidence>
<evidence type="ECO:0000255" key="4">
    <source>
        <dbReference type="PROSITE-ProRule" id="PRU00200"/>
    </source>
</evidence>
<evidence type="ECO:0000255" key="5">
    <source>
        <dbReference type="PROSITE-ProRule" id="PRU01273"/>
    </source>
</evidence>
<evidence type="ECO:0000256" key="6">
    <source>
        <dbReference type="SAM" id="MobiDB-lite"/>
    </source>
</evidence>
<evidence type="ECO:0000305" key="7"/>
<reference key="1">
    <citation type="journal article" date="2005" name="BMC Genomics">
        <title>Characterization of 954 bovine full-CDS cDNA sequences.</title>
        <authorList>
            <person name="Harhay G.P."/>
            <person name="Sonstegard T.S."/>
            <person name="Keele J.W."/>
            <person name="Heaton M.P."/>
            <person name="Clawson M.L."/>
            <person name="Snelling W.M."/>
            <person name="Wiedmann R.T."/>
            <person name="Van Tassell C.P."/>
            <person name="Smith T.P.L."/>
        </authorList>
    </citation>
    <scope>NUCLEOTIDE SEQUENCE [LARGE SCALE MRNA]</scope>
</reference>
<reference key="2">
    <citation type="submission" date="2006-02" db="EMBL/GenBank/DDBJ databases">
        <authorList>
            <consortium name="NIH - Mammalian Gene Collection (MGC) project"/>
        </authorList>
    </citation>
    <scope>NUCLEOTIDE SEQUENCE [LARGE SCALE MRNA]</scope>
    <source>
        <strain>Hereford</strain>
        <tissue>Hypothalamus</tissue>
    </source>
</reference>
<organism>
    <name type="scientific">Bos taurus</name>
    <name type="common">Bovine</name>
    <dbReference type="NCBI Taxonomy" id="9913"/>
    <lineage>
        <taxon>Eukaryota</taxon>
        <taxon>Metazoa</taxon>
        <taxon>Chordata</taxon>
        <taxon>Craniata</taxon>
        <taxon>Vertebrata</taxon>
        <taxon>Euteleostomi</taxon>
        <taxon>Mammalia</taxon>
        <taxon>Eutheria</taxon>
        <taxon>Laurasiatheria</taxon>
        <taxon>Artiodactyla</taxon>
        <taxon>Ruminantia</taxon>
        <taxon>Pecora</taxon>
        <taxon>Bovidae</taxon>
        <taxon>Bovinae</taxon>
        <taxon>Bos</taxon>
    </lineage>
</organism>
<name>EIF2D_BOVIN</name>
<feature type="chain" id="PRO_0000130610" description="Eukaryotic translation initiation factor 2D">
    <location>
        <begin position="1"/>
        <end position="579"/>
    </location>
</feature>
<feature type="domain" description="PUA" evidence="3">
    <location>
        <begin position="93"/>
        <end position="173"/>
    </location>
</feature>
<feature type="domain" description="SWIB/MDM2" evidence="5">
    <location>
        <begin position="378"/>
        <end position="462"/>
    </location>
</feature>
<feature type="domain" description="SUI1" evidence="4">
    <location>
        <begin position="486"/>
        <end position="559"/>
    </location>
</feature>
<feature type="region of interest" description="Disordered" evidence="6">
    <location>
        <begin position="222"/>
        <end position="250"/>
    </location>
</feature>
<feature type="compositionally biased region" description="Basic and acidic residues" evidence="6">
    <location>
        <begin position="224"/>
        <end position="233"/>
    </location>
</feature>
<feature type="modified residue" description="N-acetylmethionine" evidence="2">
    <location>
        <position position="1"/>
    </location>
</feature>
<feature type="modified residue" description="Phosphoserine" evidence="2">
    <location>
        <position position="232"/>
    </location>
</feature>
<feature type="modified residue" description="Phosphoserine" evidence="2">
    <location>
        <position position="356"/>
    </location>
</feature>
<accession>Q58CR3</accession>
<accession>Q29RI3</accession>
<comment type="function">
    <text evidence="1">Translation initiation factor that is able to deliver tRNA to the P-site of the eukaryotic ribosome in a GTP-independent manner. The binding of Met-tRNA(I) occurs after the AUG codon finds its position in the P-site of 40S ribosomes, the situation that takes place during initiation complex formation on some specific RNAs. Its activity in tRNA binding with 40S subunits does not require the presence of the aminoacyl moiety. Possesses the unique ability to deliver non-Met (elongator) tRNAs into the P-site of the 40S subunit. In addition to its role in initiation, can promote release of deacylated tRNA and mRNA from recycled 40S subunits following ABCE1-mediated dissociation of post-termination ribosomal complexes into subunits (By similarity).</text>
</comment>
<comment type="subcellular location">
    <subcellularLocation>
        <location evidence="1">Cytoplasm</location>
    </subcellularLocation>
</comment>
<comment type="similarity">
    <text evidence="7">Belongs to the eIF2D family.</text>
</comment>
<dbReference type="EMBL" id="BT021884">
    <property type="protein sequence ID" value="AAX46731.1"/>
    <property type="molecule type" value="mRNA"/>
</dbReference>
<dbReference type="EMBL" id="BC114158">
    <property type="protein sequence ID" value="AAI14159.1"/>
    <property type="molecule type" value="mRNA"/>
</dbReference>
<dbReference type="RefSeq" id="NP_001030276.1">
    <property type="nucleotide sequence ID" value="NM_001035104.1"/>
</dbReference>
<dbReference type="SMR" id="Q58CR3"/>
<dbReference type="FunCoup" id="Q58CR3">
    <property type="interactions" value="3497"/>
</dbReference>
<dbReference type="STRING" id="9913.ENSBTAP00000013769"/>
<dbReference type="PaxDb" id="9913-ENSBTAP00000013769"/>
<dbReference type="GeneID" id="511844"/>
<dbReference type="KEGG" id="bta:511844"/>
<dbReference type="CTD" id="1939"/>
<dbReference type="eggNOG" id="KOG2522">
    <property type="taxonomic scope" value="Eukaryota"/>
</dbReference>
<dbReference type="HOGENOM" id="CLU_012487_2_0_1"/>
<dbReference type="InParanoid" id="Q58CR3"/>
<dbReference type="OrthoDB" id="199771at2759"/>
<dbReference type="Proteomes" id="UP000009136">
    <property type="component" value="Unplaced"/>
</dbReference>
<dbReference type="GO" id="GO:0005737">
    <property type="term" value="C:cytoplasm"/>
    <property type="evidence" value="ECO:0000250"/>
    <property type="project" value="UniProtKB"/>
</dbReference>
<dbReference type="GO" id="GO:0003723">
    <property type="term" value="F:RNA binding"/>
    <property type="evidence" value="ECO:0007669"/>
    <property type="project" value="InterPro"/>
</dbReference>
<dbReference type="GO" id="GO:0003743">
    <property type="term" value="F:translation initiation factor activity"/>
    <property type="evidence" value="ECO:0000250"/>
    <property type="project" value="UniProtKB"/>
</dbReference>
<dbReference type="GO" id="GO:0001731">
    <property type="term" value="P:formation of translation preinitiation complex"/>
    <property type="evidence" value="ECO:0000318"/>
    <property type="project" value="GO_Central"/>
</dbReference>
<dbReference type="CDD" id="cd11608">
    <property type="entry name" value="eIF2D_C"/>
    <property type="match status" value="1"/>
</dbReference>
<dbReference type="CDD" id="cd11610">
    <property type="entry name" value="eIF2D_N"/>
    <property type="match status" value="1"/>
</dbReference>
<dbReference type="CDD" id="cd21156">
    <property type="entry name" value="PUA_eIF2d-like"/>
    <property type="match status" value="1"/>
</dbReference>
<dbReference type="FunFam" id="3.10.400.20:FF:000002">
    <property type="entry name" value="Eukaryotic translation initiation factor 2D"/>
    <property type="match status" value="1"/>
</dbReference>
<dbReference type="FunFam" id="3.30.780.10:FF:000007">
    <property type="entry name" value="Putative eukaryotic translation initiation factor 2d"/>
    <property type="match status" value="1"/>
</dbReference>
<dbReference type="Gene3D" id="3.10.400.20">
    <property type="match status" value="1"/>
</dbReference>
<dbReference type="Gene3D" id="3.30.780.10">
    <property type="entry name" value="SUI1-like domain"/>
    <property type="match status" value="1"/>
</dbReference>
<dbReference type="InterPro" id="IPR039757">
    <property type="entry name" value="EIF2D"/>
</dbReference>
<dbReference type="InterPro" id="IPR048247">
    <property type="entry name" value="eIF2D_N"/>
</dbReference>
<dbReference type="InterPro" id="IPR039759">
    <property type="entry name" value="eIF2D_SUI1"/>
</dbReference>
<dbReference type="InterPro" id="IPR041366">
    <property type="entry name" value="Pre-PUA"/>
</dbReference>
<dbReference type="InterPro" id="IPR002478">
    <property type="entry name" value="PUA"/>
</dbReference>
<dbReference type="InterPro" id="IPR015947">
    <property type="entry name" value="PUA-like_sf"/>
</dbReference>
<dbReference type="InterPro" id="IPR048248">
    <property type="entry name" value="PUA_eIF2d-like"/>
</dbReference>
<dbReference type="InterPro" id="IPR001950">
    <property type="entry name" value="SUI1"/>
</dbReference>
<dbReference type="InterPro" id="IPR036877">
    <property type="entry name" value="SUI1_dom_sf"/>
</dbReference>
<dbReference type="InterPro" id="IPR036885">
    <property type="entry name" value="SWIB_MDM2_dom_sf"/>
</dbReference>
<dbReference type="InterPro" id="IPR003121">
    <property type="entry name" value="SWIB_MDM2_domain"/>
</dbReference>
<dbReference type="PANTHER" id="PTHR12217">
    <property type="entry name" value="EUKARYOTIC TRANSLATION INITIATION FACTOR 2D"/>
    <property type="match status" value="1"/>
</dbReference>
<dbReference type="PANTHER" id="PTHR12217:SF4">
    <property type="entry name" value="EUKARYOTIC TRANSLATION INITIATION FACTOR 2D"/>
    <property type="match status" value="1"/>
</dbReference>
<dbReference type="Pfam" id="PF17832">
    <property type="entry name" value="Pre-PUA"/>
    <property type="match status" value="1"/>
</dbReference>
<dbReference type="Pfam" id="PF01253">
    <property type="entry name" value="SUI1"/>
    <property type="match status" value="1"/>
</dbReference>
<dbReference type="Pfam" id="PF25304">
    <property type="entry name" value="WH_eIF2D"/>
    <property type="match status" value="1"/>
</dbReference>
<dbReference type="SMART" id="SM00359">
    <property type="entry name" value="PUA"/>
    <property type="match status" value="1"/>
</dbReference>
<dbReference type="SUPFAM" id="SSF55159">
    <property type="entry name" value="eIF1-like"/>
    <property type="match status" value="1"/>
</dbReference>
<dbReference type="SUPFAM" id="SSF88697">
    <property type="entry name" value="PUA domain-like"/>
    <property type="match status" value="1"/>
</dbReference>
<dbReference type="SUPFAM" id="SSF47592">
    <property type="entry name" value="SWIB/MDM2 domain"/>
    <property type="match status" value="1"/>
</dbReference>
<dbReference type="PROSITE" id="PS50890">
    <property type="entry name" value="PUA"/>
    <property type="match status" value="1"/>
</dbReference>
<dbReference type="PROSITE" id="PS50296">
    <property type="entry name" value="SUI1"/>
    <property type="match status" value="1"/>
</dbReference>
<dbReference type="PROSITE" id="PS51925">
    <property type="entry name" value="SWIB_MDM2"/>
    <property type="match status" value="1"/>
</dbReference>